<protein>
    <recommendedName>
        <fullName evidence="9">DNA polymerase III subunit chi</fullName>
        <ecNumber>2.7.7.7</ecNumber>
    </recommendedName>
    <alternativeName>
        <fullName evidence="10">Accessory clamp loader complex subunit chi</fullName>
    </alternativeName>
    <alternativeName>
        <fullName evidence="10">Replication clamp loader subunit HolC</fullName>
    </alternativeName>
</protein>
<organism>
    <name type="scientific">Escherichia coli (strain K12)</name>
    <dbReference type="NCBI Taxonomy" id="83333"/>
    <lineage>
        <taxon>Bacteria</taxon>
        <taxon>Pseudomonadati</taxon>
        <taxon>Pseudomonadota</taxon>
        <taxon>Gammaproteobacteria</taxon>
        <taxon>Enterobacterales</taxon>
        <taxon>Enterobacteriaceae</taxon>
        <taxon>Escherichia</taxon>
    </lineage>
</organism>
<comment type="function">
    <text evidence="2 5 6 7 8">Part of the beta sliding clamp loading complex, which hydrolyzes ATP to load the beta clamp onto primed DNA to form the DNA replication pre-initiation complex (PubMed:2040637). DNA polymerase III is a complex, multichain enzyme responsible for most of the replicative synthesis in bacteria. This DNA polymerase also exhibits 3' to 5' exonuclease activity. Genetically identified as involved in the repair of replication forks and tolerance of the chain-terminating nucleoside analog 3' AZT (PubMed:26544712, PubMed:33582602, PubMed:34181484). This subunit may stabilize YoaA and/or stimulate the helicase activity of YoaA (PubMed:36509145).</text>
</comment>
<comment type="catalytic activity">
    <reaction>
        <text>DNA(n) + a 2'-deoxyribonucleoside 5'-triphosphate = DNA(n+1) + diphosphate</text>
        <dbReference type="Rhea" id="RHEA:22508"/>
        <dbReference type="Rhea" id="RHEA-COMP:17339"/>
        <dbReference type="Rhea" id="RHEA-COMP:17340"/>
        <dbReference type="ChEBI" id="CHEBI:33019"/>
        <dbReference type="ChEBI" id="CHEBI:61560"/>
        <dbReference type="ChEBI" id="CHEBI:173112"/>
        <dbReference type="EC" id="2.7.7.7"/>
    </reaction>
</comment>
<comment type="subunit">
    <text evidence="1 2 3 4 5 6 7 8">The DNA polymerase III holoenzyme complex contains at least 10 different subunits organized into 3 functionally essential subassemblies: the Pol III core, the beta sliding clamp processivity factor and the clamp-loading complex. The Pol III core (subunits alpha, epsilon and theta) contains the polymerase and the 3'-5' exonuclease proofreading activities (PubMed:2040637). The polymerase is tethered to the template via the dimeric beta sliding clamp processivity factor. The clamp-loading complex (also called gamma complex) assembles the beta sliding clamp onto the primed template and plays a central role in the organization and communication at the replication fork. The clamp-loading complex contains delta, delta', psi and chi, and 3 copies of either or both of two different DnaX proteins, gamma and tau. The DNA replisome complex has a single clamp loader (3 tau and 1 each of delta, delta', psi and chi subunits) which binds 3 Pol III cores (1 core on the leading strand and 2 on the lagging strand) each with a beta sliding clamp dimer. Additional proteins in the replisome are other copies of gamma, psi (holD) and chi (this protein), SSB, DNA helicase and RNA primase (PubMed:20413500, PubMed:22157955). The clamp loader hydrolyzes ATP to assemble the beta processivity factor onto the primed template (PubMed:2040637) and plays a central role in the organization and communication at the replication fork. The only subunit of the DNA polymerase III holoenzyme known to interact with single-stranded DNA binding protein (SSB) (PubMed:33582602). Interacts directly with the psi subunit (holD) (PubMed:14717711, PubMed:26544712, PubMed:33582602). Interacts directly with DNA helicase YoaA (PubMed:26544712, PubMed:33582602, PubMed:34181484, PubMed:36509145). It binds to HolD and YoaA, but not both simultaneously (PubMed:33582602).</text>
</comment>
<comment type="interaction">
    <interactant intactId="EBI-549169">
        <id>P28905</id>
    </interactant>
    <interactant intactId="EBI-549140">
        <id>P06710</id>
        <label>dnaX</label>
    </interactant>
    <organismsDiffer>false</organismsDiffer>
    <experiments>20</experiments>
</comment>
<comment type="interaction">
    <interactant intactId="EBI-549169">
        <id>P28905</id>
    </interactant>
    <interactant intactId="EBI-549161">
        <id>P28631</id>
        <label>holB</label>
    </interactant>
    <organismsDiffer>false</organismsDiffer>
    <experiments>6</experiments>
</comment>
<comment type="interaction">
    <interactant intactId="EBI-549169">
        <id>P28905</id>
    </interactant>
    <interactant intactId="EBI-549176">
        <id>P28632</id>
        <label>holD</label>
    </interactant>
    <organismsDiffer>false</organismsDiffer>
    <experiments>25</experiments>
</comment>
<comment type="interaction">
    <interactant intactId="EBI-549169">
        <id>P28905</id>
    </interactant>
    <interactant intactId="EBI-1118620">
        <id>P0AGE0</id>
        <label>ssb</label>
    </interactant>
    <organismsDiffer>false</organismsDiffer>
    <experiments>10</experiments>
</comment>
<comment type="disruption phenotype">
    <text evidence="5 6">Knockout mutants are sensitive to high levels of chain-terminating nucleoside analog 3' azidothymidine (AZT) (PubMed:26544712, PubMed:33582602).</text>
</comment>
<comment type="similarity">
    <text evidence="10">Belongs to the DNA polymerase III chi/HolC chain family.</text>
</comment>
<gene>
    <name evidence="9" type="primary">holC</name>
    <name type="ordered locus">b4259</name>
    <name type="ordered locus">JW4216</name>
</gene>
<proteinExistence type="evidence at protein level"/>
<dbReference type="EC" id="2.7.7.7"/>
<dbReference type="EMBL" id="L04574">
    <property type="protein sequence ID" value="AAA70368.1"/>
    <property type="molecule type" value="Genomic_DNA"/>
</dbReference>
<dbReference type="EMBL" id="Z14155">
    <property type="protein sequence ID" value="CAA78524.1"/>
    <property type="molecule type" value="Genomic_DNA"/>
</dbReference>
<dbReference type="EMBL" id="U14003">
    <property type="protein sequence ID" value="AAA97156.1"/>
    <property type="molecule type" value="Genomic_DNA"/>
</dbReference>
<dbReference type="EMBL" id="U00096">
    <property type="protein sequence ID" value="AAC77216.1"/>
    <property type="molecule type" value="Genomic_DNA"/>
</dbReference>
<dbReference type="EMBL" id="AP009048">
    <property type="protein sequence ID" value="BAE78256.1"/>
    <property type="molecule type" value="Genomic_DNA"/>
</dbReference>
<dbReference type="EMBL" id="X15130">
    <property type="protein sequence ID" value="CAA33226.1"/>
    <property type="molecule type" value="Genomic_DNA"/>
</dbReference>
<dbReference type="PIR" id="A46739">
    <property type="entry name" value="A46739"/>
</dbReference>
<dbReference type="RefSeq" id="NP_418680.1">
    <property type="nucleotide sequence ID" value="NC_000913.3"/>
</dbReference>
<dbReference type="RefSeq" id="WP_000786400.1">
    <property type="nucleotide sequence ID" value="NZ_LN832404.1"/>
</dbReference>
<dbReference type="PDB" id="1EM8">
    <property type="method" value="X-ray"/>
    <property type="resolution" value="2.10 A"/>
    <property type="chains" value="A/C=1-147"/>
</dbReference>
<dbReference type="PDB" id="3SXU">
    <property type="method" value="X-ray"/>
    <property type="resolution" value="1.85 A"/>
    <property type="chains" value="A=1-147"/>
</dbReference>
<dbReference type="PDBsum" id="1EM8"/>
<dbReference type="PDBsum" id="3SXU"/>
<dbReference type="SMR" id="P28905"/>
<dbReference type="BioGRID" id="4262725">
    <property type="interactions" value="161"/>
</dbReference>
<dbReference type="BioGRID" id="853072">
    <property type="interactions" value="5"/>
</dbReference>
<dbReference type="ComplexPortal" id="CPX-1926">
    <property type="entry name" value="DNA polymerase III clamp loader complex"/>
</dbReference>
<dbReference type="DIP" id="DIP-9933N"/>
<dbReference type="FunCoup" id="P28905">
    <property type="interactions" value="146"/>
</dbReference>
<dbReference type="IntAct" id="P28905">
    <property type="interactions" value="41"/>
</dbReference>
<dbReference type="MINT" id="P28905"/>
<dbReference type="STRING" id="511145.b4259"/>
<dbReference type="jPOST" id="P28905"/>
<dbReference type="PaxDb" id="511145-b4259"/>
<dbReference type="EnsemblBacteria" id="AAC77216">
    <property type="protein sequence ID" value="AAC77216"/>
    <property type="gene ID" value="b4259"/>
</dbReference>
<dbReference type="GeneID" id="948787"/>
<dbReference type="KEGG" id="ecj:JW4216"/>
<dbReference type="KEGG" id="eco:b4259"/>
<dbReference type="KEGG" id="ecoc:C3026_22975"/>
<dbReference type="PATRIC" id="fig|1411691.4.peg.2445"/>
<dbReference type="EchoBASE" id="EB1385"/>
<dbReference type="eggNOG" id="COG2927">
    <property type="taxonomic scope" value="Bacteria"/>
</dbReference>
<dbReference type="HOGENOM" id="CLU_131584_0_0_6"/>
<dbReference type="InParanoid" id="P28905"/>
<dbReference type="OMA" id="CKLTEKA"/>
<dbReference type="OrthoDB" id="5297568at2"/>
<dbReference type="PhylomeDB" id="P28905"/>
<dbReference type="BioCyc" id="EcoCyc:EG11413-MONOMER"/>
<dbReference type="BioCyc" id="MetaCyc:EG11413-MONOMER"/>
<dbReference type="BRENDA" id="3.6.4.B8">
    <property type="organism ID" value="2026"/>
</dbReference>
<dbReference type="EvolutionaryTrace" id="P28905"/>
<dbReference type="PRO" id="PR:P28905"/>
<dbReference type="Proteomes" id="UP000000625">
    <property type="component" value="Chromosome"/>
</dbReference>
<dbReference type="GO" id="GO:0009360">
    <property type="term" value="C:DNA polymerase III complex"/>
    <property type="evidence" value="ECO:0000303"/>
    <property type="project" value="ComplexPortal"/>
</dbReference>
<dbReference type="GO" id="GO:0043846">
    <property type="term" value="C:DNA polymerase III, clamp loader complex"/>
    <property type="evidence" value="ECO:0000353"/>
    <property type="project" value="ComplexPortal"/>
</dbReference>
<dbReference type="GO" id="GO:0030894">
    <property type="term" value="C:replisome"/>
    <property type="evidence" value="ECO:0000303"/>
    <property type="project" value="ComplexPortal"/>
</dbReference>
<dbReference type="GO" id="GO:0003677">
    <property type="term" value="F:DNA binding"/>
    <property type="evidence" value="ECO:0007669"/>
    <property type="project" value="InterPro"/>
</dbReference>
<dbReference type="GO" id="GO:0003887">
    <property type="term" value="F:DNA-directed DNA polymerase activity"/>
    <property type="evidence" value="ECO:0000314"/>
    <property type="project" value="EcoCyc"/>
</dbReference>
<dbReference type="GO" id="GO:0006260">
    <property type="term" value="P:DNA replication"/>
    <property type="evidence" value="ECO:0000303"/>
    <property type="project" value="ComplexPortal"/>
</dbReference>
<dbReference type="GO" id="GO:0006261">
    <property type="term" value="P:DNA-templated DNA replication"/>
    <property type="evidence" value="ECO:0000303"/>
    <property type="project" value="ComplexPortal"/>
</dbReference>
<dbReference type="GO" id="GO:0032298">
    <property type="term" value="P:positive regulation of DNA-templated DNA replication initiation"/>
    <property type="evidence" value="ECO:0000314"/>
    <property type="project" value="EcoliWiki"/>
</dbReference>
<dbReference type="GO" id="GO:0009314">
    <property type="term" value="P:response to radiation"/>
    <property type="evidence" value="ECO:0000315"/>
    <property type="project" value="EcoCyc"/>
</dbReference>
<dbReference type="FunFam" id="3.40.50.10110:FF:000001">
    <property type="entry name" value="DNA polymerase III subunit chi"/>
    <property type="match status" value="1"/>
</dbReference>
<dbReference type="Gene3D" id="3.40.50.10110">
    <property type="entry name" value="DNA polymerase III subunit chi"/>
    <property type="match status" value="1"/>
</dbReference>
<dbReference type="InterPro" id="IPR007459">
    <property type="entry name" value="DNA_pol3_chi"/>
</dbReference>
<dbReference type="InterPro" id="IPR036768">
    <property type="entry name" value="PolIII_chi_sf"/>
</dbReference>
<dbReference type="NCBIfam" id="NF004345">
    <property type="entry name" value="PRK05728.1-1"/>
    <property type="match status" value="1"/>
</dbReference>
<dbReference type="PANTHER" id="PTHR38767">
    <property type="entry name" value="DNA POLYMERASE III SUBUNIT CHI"/>
    <property type="match status" value="1"/>
</dbReference>
<dbReference type="PANTHER" id="PTHR38767:SF1">
    <property type="entry name" value="DNA POLYMERASE III SUBUNIT CHI"/>
    <property type="match status" value="1"/>
</dbReference>
<dbReference type="Pfam" id="PF04364">
    <property type="entry name" value="DNA_pol3_chi"/>
    <property type="match status" value="1"/>
</dbReference>
<dbReference type="SUPFAM" id="SSF102400">
    <property type="entry name" value="DNA polymerase III chi subunit"/>
    <property type="match status" value="1"/>
</dbReference>
<reference key="1">
    <citation type="journal article" date="1993" name="J. Biol. Chem.">
        <title>DNA polymerase III accessory proteins. III. holC and holD encoding chi and psi.</title>
        <authorList>
            <person name="Xiao H."/>
            <person name="Crombie R."/>
            <person name="Dong Z."/>
            <person name="Onrust R."/>
            <person name="O'Donnell M."/>
        </authorList>
    </citation>
    <scope>NUCLEOTIDE SEQUENCE [GENOMIC DNA]</scope>
    <source>
        <strain>K12</strain>
    </source>
</reference>
<reference key="2">
    <citation type="journal article" date="1993" name="Mol. Gen. Genet.">
        <title>Identification, molecular cloning and characterization of the gene encoding the chi subunit of DNA polymerase III holoenzyme of Escherichia coli.</title>
        <authorList>
            <person name="Carter J.R."/>
            <person name="Franden M.A."/>
            <person name="Lippincott J."/>
            <person name="McHenry C.S."/>
        </authorList>
    </citation>
    <scope>NUCLEOTIDE SEQUENCE [GENOMIC DNA]</scope>
    <scope>PROTEIN SEQUENCE OF 1-18</scope>
    <source>
        <strain>K12 / MG1655 / ATCC 47076</strain>
    </source>
</reference>
<reference key="3">
    <citation type="journal article" date="1995" name="Nucleic Acids Res.">
        <title>Analysis of the Escherichia coli genome VI: DNA sequence of the region from 92.8 through 100 minutes.</title>
        <authorList>
            <person name="Burland V.D."/>
            <person name="Plunkett G. III"/>
            <person name="Sofia H.J."/>
            <person name="Daniels D.L."/>
            <person name="Blattner F.R."/>
        </authorList>
    </citation>
    <scope>NUCLEOTIDE SEQUENCE [LARGE SCALE GENOMIC DNA]</scope>
    <source>
        <strain>K12 / MG1655 / ATCC 47076</strain>
    </source>
</reference>
<reference key="4">
    <citation type="journal article" date="1997" name="Science">
        <title>The complete genome sequence of Escherichia coli K-12.</title>
        <authorList>
            <person name="Blattner F.R."/>
            <person name="Plunkett G. III"/>
            <person name="Bloch C.A."/>
            <person name="Perna N.T."/>
            <person name="Burland V."/>
            <person name="Riley M."/>
            <person name="Collado-Vides J."/>
            <person name="Glasner J.D."/>
            <person name="Rode C.K."/>
            <person name="Mayhew G.F."/>
            <person name="Gregor J."/>
            <person name="Davis N.W."/>
            <person name="Kirkpatrick H.A."/>
            <person name="Goeden M.A."/>
            <person name="Rose D.J."/>
            <person name="Mau B."/>
            <person name="Shao Y."/>
        </authorList>
    </citation>
    <scope>NUCLEOTIDE SEQUENCE [LARGE SCALE GENOMIC DNA]</scope>
    <source>
        <strain>K12 / MG1655 / ATCC 47076</strain>
    </source>
</reference>
<reference key="5">
    <citation type="journal article" date="2006" name="Mol. Syst. Biol.">
        <title>Highly accurate genome sequences of Escherichia coli K-12 strains MG1655 and W3110.</title>
        <authorList>
            <person name="Hayashi K."/>
            <person name="Morooka N."/>
            <person name="Yamamoto Y."/>
            <person name="Fujita K."/>
            <person name="Isono K."/>
            <person name="Choi S."/>
            <person name="Ohtsubo E."/>
            <person name="Baba T."/>
            <person name="Wanner B.L."/>
            <person name="Mori H."/>
            <person name="Horiuchi T."/>
        </authorList>
    </citation>
    <scope>NUCLEOTIDE SEQUENCE [LARGE SCALE GENOMIC DNA]</scope>
    <source>
        <strain>K12 / W3110 / ATCC 27325 / DSM 5911</strain>
    </source>
</reference>
<reference key="6">
    <citation type="journal article" date="1989" name="EMBO J.">
        <title>xerB, an Escherichia coli gene required for plasmid ColE1 site-specific recombination, is identical to pepA, encoding aminopeptidase A, a protein with substantial similarity to bovine lens leucine aminopeptidase.</title>
        <authorList>
            <person name="Stirling C.J."/>
            <person name="Colloms S."/>
            <person name="Collins J.F."/>
            <person name="Szatmari G."/>
            <person name="Sherratt D.J."/>
        </authorList>
    </citation>
    <scope>NUCLEOTIDE SEQUENCE [GENOMIC DNA] OF 1-102</scope>
    <source>
        <strain>K12</strain>
    </source>
</reference>
<reference key="7">
    <citation type="journal article" date="1993" name="J. Biol. Chem.">
        <title>DNA polymerase III accessory proteins. IV. Characterization of chi and psi.</title>
        <authorList>
            <person name="Xiao H."/>
            <person name="Dong Z."/>
            <person name="O'Donnell M."/>
        </authorList>
    </citation>
    <scope>CHARACTERIZATION</scope>
</reference>
<reference key="8">
    <citation type="journal article" date="1991" name="J. Biol. Chem.">
        <title>Mechanism of the sliding beta-clamp of DNA polymerase III holoenzyme.</title>
        <authorList>
            <person name="Stukenberg P.T."/>
            <person name="Studwell-Vaughan P.S."/>
            <person name="O'Donnell M."/>
        </authorList>
    </citation>
    <scope>FUNCTION</scope>
    <scope>SUBUNIT</scope>
</reference>
<reference key="9">
    <citation type="journal article" date="2010" name="Science">
        <title>Stoichiometry and architecture of active DNA replication machinery in Escherichia coli.</title>
        <authorList>
            <person name="Reyes-Lamothe R."/>
            <person name="Sherratt D.J."/>
            <person name="Leake M.C."/>
        </authorList>
    </citation>
    <scope>REPLISOME COMPLEX</scope>
    <scope>SUBUNIT</scope>
</reference>
<reference key="10">
    <citation type="journal article" date="2011" name="Nat. Struct. Mol. Biol.">
        <title>Single-molecule studies reveal the function of a third polymerase in the replisome.</title>
        <authorList>
            <person name="Georgescu R.E."/>
            <person name="Kurth I."/>
            <person name="O'Donnell M.E."/>
        </authorList>
    </citation>
    <scope>REPLISOME COMPLEX</scope>
    <scope>SUBUNIT</scope>
</reference>
<reference key="11">
    <citation type="journal article" date="2015" name="PLoS Genet.">
        <title>Connecting replication and repair: YoaA, a helicase-related protein, promotes azidothymidine tolerance through association with Chi, an accessory clamp loader protein.</title>
        <authorList>
            <person name="Brown L.T."/>
            <person name="Sutera V.A. Jr."/>
            <person name="Zhou S."/>
            <person name="Weitzel C.S."/>
            <person name="Cheng Y."/>
            <person name="Lovett S.T."/>
        </authorList>
    </citation>
    <scope>FUNCTION</scope>
    <scope>INTERACTION WITH HOLD (PSI)</scope>
    <scope>INTERACTION WITH YOAA</scope>
    <scope>DISRUPTION PHENOTYPE</scope>
    <scope>MUTAGENESIS OF PHE-64; VAL-117; ARG-128 AND TYR-131</scope>
    <source>
        <strain>K12 / MG1655 / ATCC 47076</strain>
    </source>
</reference>
<reference key="12">
    <citation type="journal article" date="2021" name="DNA Repair">
        <title>Alternative complexes formed by the Escherichia coli clamp loader accessory protein HolC (x) with replication protein HolD (psi) and repair protein YoaA.</title>
        <authorList>
            <person name="Sutera V.A."/>
            <person name="Weeks S.J."/>
            <person name="Dudenhausen E.E."/>
            <person name="Baggett H.B.R."/>
            <person name="Shaw M.C."/>
            <person name="Brand K.A."/>
            <person name="Glass D.J."/>
            <person name="Bloom L.B."/>
            <person name="Lovett S.T."/>
        </authorList>
    </citation>
    <scope>FUNCTION</scope>
    <scope>INTERACTION WITH HOLD (PSI)</scope>
    <scope>INTERACTION WITH SSB</scope>
    <scope>INTERACTION WITH YOAA</scope>
    <scope>DISRUPTION PHENOTYPE</scope>
    <scope>MUTAGENESIS OF PHE-6; ALA-20; ASP-45; GLU-54; TRP-57 AND PHE-64</scope>
</reference>
<reference key="13">
    <citation type="journal article" date="2021" name="J. Bacteriol.">
        <title>Genetic Analysis of DinG Family Helicase YoaA and Its Interaction with Replication Clamp Loader Protein HolC in Escherichia coli.</title>
        <authorList>
            <person name="Sutera V.A."/>
            <person name="Sass T.H."/>
            <person name="Leonard S.E."/>
            <person name="Wu L."/>
            <person name="Glass D.J."/>
            <person name="Giordano G.G."/>
            <person name="Zur Y."/>
            <person name="Lovett S.T."/>
        </authorList>
    </citation>
    <scope>FUNCTION</scope>
    <scope>INTERACTION WITH YOAA</scope>
    <source>
        <strain>K12 / MG1655 / ATCC 47076</strain>
    </source>
</reference>
<reference key="14">
    <citation type="journal article" date="2023" name="J. Biol. Chem.">
        <title>Characterization of the Escherichia coli XPD/Rad3 iron-sulfur helicase YoaA in complex with the DNA polymerase III clamp loader subunit chi (chi).</title>
        <authorList>
            <person name="Weeks-Pollenz S.J."/>
            <person name="Ali Y."/>
            <person name="Morris L.A."/>
            <person name="Sutera V.A."/>
            <person name="Dudenhausen E.E."/>
            <person name="Hibnick M."/>
            <person name="Lovett S.T."/>
            <person name="Bloom L.B."/>
        </authorList>
    </citation>
    <scope>INTERACTION WITH YOAA</scope>
    <scope>MUTAGENESIS OF PHE-64</scope>
</reference>
<reference key="15">
    <citation type="journal article" date="1992" name="Bioessays">
        <title>Accessory protein function in the DNA polymerase III holoenzyme from E. coli.</title>
        <authorList>
            <person name="O'Donnell M."/>
        </authorList>
    </citation>
    <scope>REVIEW</scope>
</reference>
<reference key="16">
    <citation type="journal article" date="2004" name="Eur. J. Biochem.">
        <title>Crystal structure of the chi:psi sub-assembly of the Escherichia coli DNA polymerase clamp-loader complex.</title>
        <authorList>
            <person name="Gulbis J.M."/>
            <person name="Kazmirski S.L."/>
            <person name="Finkelstein J."/>
            <person name="Kelman Z."/>
            <person name="O'Donnell M."/>
            <person name="Kuriyan J."/>
        </authorList>
    </citation>
    <scope>X-RAY CRYSTALLOGRAPHY (2.1 ANGSTROMS)IN COMPLEX WITH HOLD (PSI)</scope>
</reference>
<evidence type="ECO:0000269" key="1">
    <source>
    </source>
</evidence>
<evidence type="ECO:0000269" key="2">
    <source>
    </source>
</evidence>
<evidence type="ECO:0000269" key="3">
    <source>
    </source>
</evidence>
<evidence type="ECO:0000269" key="4">
    <source>
    </source>
</evidence>
<evidence type="ECO:0000269" key="5">
    <source>
    </source>
</evidence>
<evidence type="ECO:0000269" key="6">
    <source>
    </source>
</evidence>
<evidence type="ECO:0000269" key="7">
    <source>
    </source>
</evidence>
<evidence type="ECO:0000269" key="8">
    <source>
    </source>
</evidence>
<evidence type="ECO:0000303" key="9">
    <source>
    </source>
</evidence>
<evidence type="ECO:0000305" key="10"/>
<evidence type="ECO:0007829" key="11">
    <source>
        <dbReference type="PDB" id="3SXU"/>
    </source>
</evidence>
<keyword id="KW-0002">3D-structure</keyword>
<keyword id="KW-0903">Direct protein sequencing</keyword>
<keyword id="KW-0235">DNA replication</keyword>
<keyword id="KW-0239">DNA-directed DNA polymerase</keyword>
<keyword id="KW-0548">Nucleotidyltransferase</keyword>
<keyword id="KW-1185">Reference proteome</keyword>
<keyword id="KW-0808">Transferase</keyword>
<sequence length="147" mass="16633">MKNATFYLLDNDTTVDGLSAVEQLVCEIAAERWRSGKRVLIACEDEKQAYRLDEALWARPAESFVPHNLAGEGPRGGAPVEIAWPQKRSSSRRDILISLRTSFADFATAFTEVVDFVPYEDSLKQLARERYKAYRVAGFNLNTATWK</sequence>
<accession>P28905</accession>
<accession>P11649</accession>
<accession>Q2M650</accession>
<feature type="chain" id="PRO_0000105517" description="DNA polymerase III subunit chi">
    <location>
        <begin position="1"/>
        <end position="147"/>
    </location>
</feature>
<feature type="mutagenesis site" description="Partially complements the AZT sensitivity of a knockout mutant." evidence="6">
    <original>F</original>
    <variation>A</variation>
    <location>
        <position position="6"/>
    </location>
</feature>
<feature type="mutagenesis site" description="Cannot complement the AZT sensitivity of a knockout mutant." evidence="6">
    <original>A</original>
    <variation>D</variation>
    <location>
        <position position="20"/>
    </location>
</feature>
<feature type="mutagenesis site" description="Cannot complement the AZT sensitivity of a knockout mutant." evidence="6">
    <original>D</original>
    <variation>A</variation>
    <location>
        <position position="45"/>
    </location>
</feature>
<feature type="mutagenesis site" description="Cannot complement the AZT sensitivity of a knockout mutant." evidence="6">
    <original>E</original>
    <variation>A</variation>
    <location>
        <position position="54"/>
    </location>
</feature>
<feature type="mutagenesis site" description="Cannot complement the AZT sensitivity of a knockout mutant, interacts with SSB, decreased interaction with HolD, no interaction with YoaA." evidence="6">
    <original>W</original>
    <variation>A</variation>
    <location>
        <position position="57"/>
    </location>
</feature>
<feature type="mutagenesis site" description="Cannot complement the AZT sensitivity of the knockout mutant, interacts with SSB, decreased interaction with HolD, no interaction with YoaA." evidence="5 6 8">
    <original>F</original>
    <variation>A</variation>
    <location>
        <position position="64"/>
    </location>
</feature>
<feature type="mutagenesis site" description="Cannot fully complement the AZT sensitivity of the knockout mutant." evidence="5">
    <original>V</original>
    <variation>F</variation>
    <location>
        <position position="117"/>
    </location>
</feature>
<feature type="mutagenesis site" description="Cannot fully complement the AZT sensitivity of the knockout mutant." evidence="5">
    <original>R</original>
    <variation>A</variation>
    <location>
        <position position="128"/>
    </location>
</feature>
<feature type="mutagenesis site" description="Cannot fully complement the AZT sensitivity of the knockout mutant." evidence="5">
    <original>Y</original>
    <variation>L</variation>
    <location>
        <position position="131"/>
    </location>
</feature>
<feature type="strand" evidence="11">
    <location>
        <begin position="3"/>
        <end position="8"/>
    </location>
</feature>
<feature type="helix" evidence="11">
    <location>
        <begin position="20"/>
        <end position="34"/>
    </location>
</feature>
<feature type="strand" evidence="11">
    <location>
        <begin position="39"/>
        <end position="42"/>
    </location>
</feature>
<feature type="helix" evidence="11">
    <location>
        <begin position="46"/>
        <end position="55"/>
    </location>
</feature>
<feature type="turn" evidence="11">
    <location>
        <begin position="56"/>
        <end position="58"/>
    </location>
</feature>
<feature type="strand" evidence="11">
    <location>
        <begin position="67"/>
        <end position="69"/>
    </location>
</feature>
<feature type="strand" evidence="11">
    <location>
        <begin position="79"/>
        <end position="83"/>
    </location>
</feature>
<feature type="strand" evidence="11">
    <location>
        <begin position="94"/>
        <end position="98"/>
    </location>
</feature>
<feature type="helix" evidence="11">
    <location>
        <begin position="105"/>
        <end position="109"/>
    </location>
</feature>
<feature type="strand" evidence="11">
    <location>
        <begin position="111"/>
        <end position="117"/>
    </location>
</feature>
<feature type="helix" evidence="11">
    <location>
        <begin position="121"/>
        <end position="123"/>
    </location>
</feature>
<feature type="helix" evidence="11">
    <location>
        <begin position="124"/>
        <end position="136"/>
    </location>
</feature>
<feature type="strand" evidence="11">
    <location>
        <begin position="140"/>
        <end position="144"/>
    </location>
</feature>
<name>HOLC_ECOLI</name>